<accession>B9M0K9</accession>
<organism>
    <name type="scientific">Geotalea daltonii (strain DSM 22248 / JCM 15807 / FRC-32)</name>
    <name type="common">Geobacter daltonii</name>
    <dbReference type="NCBI Taxonomy" id="316067"/>
    <lineage>
        <taxon>Bacteria</taxon>
        <taxon>Pseudomonadati</taxon>
        <taxon>Thermodesulfobacteriota</taxon>
        <taxon>Desulfuromonadia</taxon>
        <taxon>Geobacterales</taxon>
        <taxon>Geobacteraceae</taxon>
        <taxon>Geotalea</taxon>
    </lineage>
</organism>
<proteinExistence type="inferred from homology"/>
<protein>
    <recommendedName>
        <fullName evidence="1">Large ribosomal subunit protein bL31</fullName>
    </recommendedName>
    <alternativeName>
        <fullName evidence="2">50S ribosomal protein L31</fullName>
    </alternativeName>
</protein>
<gene>
    <name evidence="1" type="primary">rpmE</name>
    <name type="ordered locus">Geob_0682</name>
</gene>
<reference key="1">
    <citation type="submission" date="2009-01" db="EMBL/GenBank/DDBJ databases">
        <title>Complete sequence of Geobacter sp. FRC-32.</title>
        <authorList>
            <consortium name="US DOE Joint Genome Institute"/>
            <person name="Lucas S."/>
            <person name="Copeland A."/>
            <person name="Lapidus A."/>
            <person name="Glavina del Rio T."/>
            <person name="Dalin E."/>
            <person name="Tice H."/>
            <person name="Bruce D."/>
            <person name="Goodwin L."/>
            <person name="Pitluck S."/>
            <person name="Saunders E."/>
            <person name="Brettin T."/>
            <person name="Detter J.C."/>
            <person name="Han C."/>
            <person name="Larimer F."/>
            <person name="Land M."/>
            <person name="Hauser L."/>
            <person name="Kyrpides N."/>
            <person name="Ovchinnikova G."/>
            <person name="Kostka J."/>
            <person name="Richardson P."/>
        </authorList>
    </citation>
    <scope>NUCLEOTIDE SEQUENCE [LARGE SCALE GENOMIC DNA]</scope>
    <source>
        <strain>DSM 22248 / JCM 15807 / FRC-32</strain>
    </source>
</reference>
<feature type="chain" id="PRO_1000176963" description="Large ribosomal subunit protein bL31">
    <location>
        <begin position="1"/>
        <end position="65"/>
    </location>
</feature>
<feature type="binding site" evidence="1">
    <location>
        <position position="16"/>
    </location>
    <ligand>
        <name>Zn(2+)</name>
        <dbReference type="ChEBI" id="CHEBI:29105"/>
    </ligand>
</feature>
<feature type="binding site" evidence="1">
    <location>
        <position position="18"/>
    </location>
    <ligand>
        <name>Zn(2+)</name>
        <dbReference type="ChEBI" id="CHEBI:29105"/>
    </ligand>
</feature>
<feature type="binding site" evidence="1">
    <location>
        <position position="36"/>
    </location>
    <ligand>
        <name>Zn(2+)</name>
        <dbReference type="ChEBI" id="CHEBI:29105"/>
    </ligand>
</feature>
<feature type="binding site" evidence="1">
    <location>
        <position position="39"/>
    </location>
    <ligand>
        <name>Zn(2+)</name>
        <dbReference type="ChEBI" id="CHEBI:29105"/>
    </ligand>
</feature>
<comment type="function">
    <text evidence="1">Binds the 23S rRNA.</text>
</comment>
<comment type="cofactor">
    <cofactor evidence="1">
        <name>Zn(2+)</name>
        <dbReference type="ChEBI" id="CHEBI:29105"/>
    </cofactor>
    <text evidence="1">Binds 1 zinc ion per subunit.</text>
</comment>
<comment type="subunit">
    <text evidence="1">Part of the 50S ribosomal subunit.</text>
</comment>
<comment type="similarity">
    <text evidence="1">Belongs to the bacterial ribosomal protein bL31 family. Type A subfamily.</text>
</comment>
<evidence type="ECO:0000255" key="1">
    <source>
        <dbReference type="HAMAP-Rule" id="MF_00501"/>
    </source>
</evidence>
<evidence type="ECO:0000305" key="2"/>
<dbReference type="EMBL" id="CP001390">
    <property type="protein sequence ID" value="ACM19046.1"/>
    <property type="molecule type" value="Genomic_DNA"/>
</dbReference>
<dbReference type="RefSeq" id="WP_012645775.1">
    <property type="nucleotide sequence ID" value="NC_011979.1"/>
</dbReference>
<dbReference type="SMR" id="B9M0K9"/>
<dbReference type="STRING" id="316067.Geob_0682"/>
<dbReference type="KEGG" id="geo:Geob_0682"/>
<dbReference type="eggNOG" id="COG0254">
    <property type="taxonomic scope" value="Bacteria"/>
</dbReference>
<dbReference type="HOGENOM" id="CLU_114306_4_3_7"/>
<dbReference type="OrthoDB" id="9803251at2"/>
<dbReference type="Proteomes" id="UP000007721">
    <property type="component" value="Chromosome"/>
</dbReference>
<dbReference type="GO" id="GO:1990904">
    <property type="term" value="C:ribonucleoprotein complex"/>
    <property type="evidence" value="ECO:0007669"/>
    <property type="project" value="UniProtKB-KW"/>
</dbReference>
<dbReference type="GO" id="GO:0005840">
    <property type="term" value="C:ribosome"/>
    <property type="evidence" value="ECO:0007669"/>
    <property type="project" value="UniProtKB-KW"/>
</dbReference>
<dbReference type="GO" id="GO:0046872">
    <property type="term" value="F:metal ion binding"/>
    <property type="evidence" value="ECO:0007669"/>
    <property type="project" value="UniProtKB-KW"/>
</dbReference>
<dbReference type="GO" id="GO:0019843">
    <property type="term" value="F:rRNA binding"/>
    <property type="evidence" value="ECO:0007669"/>
    <property type="project" value="UniProtKB-KW"/>
</dbReference>
<dbReference type="GO" id="GO:0003735">
    <property type="term" value="F:structural constituent of ribosome"/>
    <property type="evidence" value="ECO:0007669"/>
    <property type="project" value="InterPro"/>
</dbReference>
<dbReference type="GO" id="GO:0006412">
    <property type="term" value="P:translation"/>
    <property type="evidence" value="ECO:0007669"/>
    <property type="project" value="UniProtKB-UniRule"/>
</dbReference>
<dbReference type="Gene3D" id="4.10.830.30">
    <property type="entry name" value="Ribosomal protein L31"/>
    <property type="match status" value="1"/>
</dbReference>
<dbReference type="HAMAP" id="MF_00501">
    <property type="entry name" value="Ribosomal_bL31_1"/>
    <property type="match status" value="1"/>
</dbReference>
<dbReference type="InterPro" id="IPR034704">
    <property type="entry name" value="Ribosomal_bL28/bL31-like_sf"/>
</dbReference>
<dbReference type="InterPro" id="IPR002150">
    <property type="entry name" value="Ribosomal_bL31"/>
</dbReference>
<dbReference type="InterPro" id="IPR027491">
    <property type="entry name" value="Ribosomal_bL31_A"/>
</dbReference>
<dbReference type="InterPro" id="IPR042105">
    <property type="entry name" value="Ribosomal_bL31_sf"/>
</dbReference>
<dbReference type="NCBIfam" id="TIGR00105">
    <property type="entry name" value="L31"/>
    <property type="match status" value="1"/>
</dbReference>
<dbReference type="NCBIfam" id="NF000612">
    <property type="entry name" value="PRK00019.1"/>
    <property type="match status" value="1"/>
</dbReference>
<dbReference type="NCBIfam" id="NF001809">
    <property type="entry name" value="PRK00528.1"/>
    <property type="match status" value="1"/>
</dbReference>
<dbReference type="PANTHER" id="PTHR33280">
    <property type="entry name" value="50S RIBOSOMAL PROTEIN L31, CHLOROPLASTIC"/>
    <property type="match status" value="1"/>
</dbReference>
<dbReference type="PANTHER" id="PTHR33280:SF6">
    <property type="entry name" value="LARGE RIBOSOMAL SUBUNIT PROTEIN BL31A"/>
    <property type="match status" value="1"/>
</dbReference>
<dbReference type="Pfam" id="PF01197">
    <property type="entry name" value="Ribosomal_L31"/>
    <property type="match status" value="1"/>
</dbReference>
<dbReference type="PRINTS" id="PR01249">
    <property type="entry name" value="RIBOSOMALL31"/>
</dbReference>
<dbReference type="SUPFAM" id="SSF143800">
    <property type="entry name" value="L28p-like"/>
    <property type="match status" value="1"/>
</dbReference>
<dbReference type="PROSITE" id="PS01143">
    <property type="entry name" value="RIBOSOMAL_L31"/>
    <property type="match status" value="1"/>
</dbReference>
<name>RL31_GEODF</name>
<sequence>MREGIHPKYNEVTVKCLCGNTFQTRSTKPEISTEICSACHPFFTGKQKLVDTAGRVERFKKRYGM</sequence>
<keyword id="KW-0479">Metal-binding</keyword>
<keyword id="KW-1185">Reference proteome</keyword>
<keyword id="KW-0687">Ribonucleoprotein</keyword>
<keyword id="KW-0689">Ribosomal protein</keyword>
<keyword id="KW-0694">RNA-binding</keyword>
<keyword id="KW-0699">rRNA-binding</keyword>
<keyword id="KW-0862">Zinc</keyword>